<sequence>MKEIRQFTSESVSEGHPDKVADQISDVILDAILAQDRRARVACETLVKTGMVLVAGEITTQAHIDYEQIIRETITEIGYNHSEIGFDGATCAVVNAIGKQSSDIAQGVDRELEEDQGAGDQGMMFGYASDETDVLMPAPITYAHRLVQRQAEIRRNGELPWLRPDAKSQVTLLYEDDVPVAIDAIVLSTQHSPEISQATLREAVIETIIKPVLPADWFAHCRSENIHVNPTGNFIIGGPMGDCGLTGRKIIVDTYGGMARHGGGAFSGKDPSKVDRSAAYAGRYVAKNLVAAGLAERCEVQISYAIGVAEPTSVSVNTFGTGRIAESRLVELIQAHFDLRPVGLLQMLDLIRPIYRKTAAYGHFGREEPEFTWEQTDKAEALRDAAGLGPATAEIINVRSERH</sequence>
<feature type="chain" id="PRO_0000241009" description="S-adenosylmethionine synthase">
    <location>
        <begin position="1"/>
        <end position="403"/>
    </location>
</feature>
<feature type="region of interest" description="Flexible loop" evidence="1">
    <location>
        <begin position="100"/>
        <end position="110"/>
    </location>
</feature>
<feature type="binding site" description="in other chain" evidence="1">
    <location>
        <position position="16"/>
    </location>
    <ligand>
        <name>ATP</name>
        <dbReference type="ChEBI" id="CHEBI:30616"/>
        <note>ligand shared between two neighboring subunits</note>
    </ligand>
</feature>
<feature type="binding site" evidence="1">
    <location>
        <position position="18"/>
    </location>
    <ligand>
        <name>Mg(2+)</name>
        <dbReference type="ChEBI" id="CHEBI:18420"/>
    </ligand>
</feature>
<feature type="binding site" evidence="1">
    <location>
        <position position="44"/>
    </location>
    <ligand>
        <name>K(+)</name>
        <dbReference type="ChEBI" id="CHEBI:29103"/>
    </ligand>
</feature>
<feature type="binding site" description="in other chain" evidence="1">
    <location>
        <position position="57"/>
    </location>
    <ligand>
        <name>L-methionine</name>
        <dbReference type="ChEBI" id="CHEBI:57844"/>
        <note>ligand shared between two neighboring subunits</note>
    </ligand>
</feature>
<feature type="binding site" description="in other chain" evidence="1">
    <location>
        <position position="100"/>
    </location>
    <ligand>
        <name>L-methionine</name>
        <dbReference type="ChEBI" id="CHEBI:57844"/>
        <note>ligand shared between two neighboring subunits</note>
    </ligand>
</feature>
<feature type="binding site" description="in other chain" evidence="1">
    <location>
        <begin position="165"/>
        <end position="167"/>
    </location>
    <ligand>
        <name>ATP</name>
        <dbReference type="ChEBI" id="CHEBI:30616"/>
        <note>ligand shared between two neighboring subunits</note>
    </ligand>
</feature>
<feature type="binding site" evidence="1">
    <location>
        <position position="242"/>
    </location>
    <ligand>
        <name>ATP</name>
        <dbReference type="ChEBI" id="CHEBI:30616"/>
        <note>ligand shared between two neighboring subunits</note>
    </ligand>
</feature>
<feature type="binding site" evidence="1">
    <location>
        <position position="242"/>
    </location>
    <ligand>
        <name>L-methionine</name>
        <dbReference type="ChEBI" id="CHEBI:57844"/>
        <note>ligand shared between two neighboring subunits</note>
    </ligand>
</feature>
<feature type="binding site" description="in other chain" evidence="1">
    <location>
        <begin position="248"/>
        <end position="249"/>
    </location>
    <ligand>
        <name>ATP</name>
        <dbReference type="ChEBI" id="CHEBI:30616"/>
        <note>ligand shared between two neighboring subunits</note>
    </ligand>
</feature>
<feature type="binding site" evidence="1">
    <location>
        <position position="265"/>
    </location>
    <ligand>
        <name>ATP</name>
        <dbReference type="ChEBI" id="CHEBI:30616"/>
        <note>ligand shared between two neighboring subunits</note>
    </ligand>
</feature>
<feature type="binding site" evidence="1">
    <location>
        <position position="269"/>
    </location>
    <ligand>
        <name>ATP</name>
        <dbReference type="ChEBI" id="CHEBI:30616"/>
        <note>ligand shared between two neighboring subunits</note>
    </ligand>
</feature>
<feature type="binding site" description="in other chain" evidence="1">
    <location>
        <position position="273"/>
    </location>
    <ligand>
        <name>L-methionine</name>
        <dbReference type="ChEBI" id="CHEBI:57844"/>
        <note>ligand shared between two neighboring subunits</note>
    </ligand>
</feature>
<dbReference type="EC" id="2.5.1.6" evidence="1"/>
<dbReference type="EMBL" id="CP000127">
    <property type="protein sequence ID" value="ABA59131.1"/>
    <property type="molecule type" value="Genomic_DNA"/>
</dbReference>
<dbReference type="RefSeq" id="WP_011331032.1">
    <property type="nucleotide sequence ID" value="NC_007484.1"/>
</dbReference>
<dbReference type="SMR" id="Q3J7R5"/>
<dbReference type="FunCoup" id="Q3J7R5">
    <property type="interactions" value="575"/>
</dbReference>
<dbReference type="STRING" id="323261.Noc_2678"/>
<dbReference type="KEGG" id="noc:Noc_2678"/>
<dbReference type="eggNOG" id="COG0192">
    <property type="taxonomic scope" value="Bacteria"/>
</dbReference>
<dbReference type="HOGENOM" id="CLU_041802_1_1_6"/>
<dbReference type="InParanoid" id="Q3J7R5"/>
<dbReference type="UniPathway" id="UPA00315">
    <property type="reaction ID" value="UER00080"/>
</dbReference>
<dbReference type="Proteomes" id="UP000006838">
    <property type="component" value="Chromosome"/>
</dbReference>
<dbReference type="GO" id="GO:0005737">
    <property type="term" value="C:cytoplasm"/>
    <property type="evidence" value="ECO:0007669"/>
    <property type="project" value="UniProtKB-SubCell"/>
</dbReference>
<dbReference type="GO" id="GO:0005524">
    <property type="term" value="F:ATP binding"/>
    <property type="evidence" value="ECO:0007669"/>
    <property type="project" value="UniProtKB-UniRule"/>
</dbReference>
<dbReference type="GO" id="GO:0000287">
    <property type="term" value="F:magnesium ion binding"/>
    <property type="evidence" value="ECO:0007669"/>
    <property type="project" value="UniProtKB-UniRule"/>
</dbReference>
<dbReference type="GO" id="GO:0004478">
    <property type="term" value="F:methionine adenosyltransferase activity"/>
    <property type="evidence" value="ECO:0007669"/>
    <property type="project" value="UniProtKB-UniRule"/>
</dbReference>
<dbReference type="GO" id="GO:0006730">
    <property type="term" value="P:one-carbon metabolic process"/>
    <property type="evidence" value="ECO:0007669"/>
    <property type="project" value="UniProtKB-KW"/>
</dbReference>
<dbReference type="GO" id="GO:0006556">
    <property type="term" value="P:S-adenosylmethionine biosynthetic process"/>
    <property type="evidence" value="ECO:0007669"/>
    <property type="project" value="UniProtKB-UniRule"/>
</dbReference>
<dbReference type="CDD" id="cd18079">
    <property type="entry name" value="S-AdoMet_synt"/>
    <property type="match status" value="1"/>
</dbReference>
<dbReference type="FunFam" id="3.30.300.10:FF:000003">
    <property type="entry name" value="S-adenosylmethionine synthase"/>
    <property type="match status" value="1"/>
</dbReference>
<dbReference type="FunFam" id="3.30.300.10:FF:000004">
    <property type="entry name" value="S-adenosylmethionine synthase"/>
    <property type="match status" value="1"/>
</dbReference>
<dbReference type="Gene3D" id="3.30.300.10">
    <property type="match status" value="3"/>
</dbReference>
<dbReference type="HAMAP" id="MF_00086">
    <property type="entry name" value="S_AdoMet_synth1"/>
    <property type="match status" value="1"/>
</dbReference>
<dbReference type="InterPro" id="IPR022631">
    <property type="entry name" value="ADOMET_SYNTHASE_CS"/>
</dbReference>
<dbReference type="InterPro" id="IPR022630">
    <property type="entry name" value="S-AdoMet_synt_C"/>
</dbReference>
<dbReference type="InterPro" id="IPR022629">
    <property type="entry name" value="S-AdoMet_synt_central"/>
</dbReference>
<dbReference type="InterPro" id="IPR022628">
    <property type="entry name" value="S-AdoMet_synt_N"/>
</dbReference>
<dbReference type="InterPro" id="IPR002133">
    <property type="entry name" value="S-AdoMet_synthetase"/>
</dbReference>
<dbReference type="InterPro" id="IPR022636">
    <property type="entry name" value="S-AdoMet_synthetase_sfam"/>
</dbReference>
<dbReference type="NCBIfam" id="TIGR01034">
    <property type="entry name" value="metK"/>
    <property type="match status" value="1"/>
</dbReference>
<dbReference type="PANTHER" id="PTHR11964">
    <property type="entry name" value="S-ADENOSYLMETHIONINE SYNTHETASE"/>
    <property type="match status" value="1"/>
</dbReference>
<dbReference type="Pfam" id="PF02773">
    <property type="entry name" value="S-AdoMet_synt_C"/>
    <property type="match status" value="1"/>
</dbReference>
<dbReference type="Pfam" id="PF02772">
    <property type="entry name" value="S-AdoMet_synt_M"/>
    <property type="match status" value="1"/>
</dbReference>
<dbReference type="Pfam" id="PF00438">
    <property type="entry name" value="S-AdoMet_synt_N"/>
    <property type="match status" value="1"/>
</dbReference>
<dbReference type="PIRSF" id="PIRSF000497">
    <property type="entry name" value="MAT"/>
    <property type="match status" value="1"/>
</dbReference>
<dbReference type="SUPFAM" id="SSF55973">
    <property type="entry name" value="S-adenosylmethionine synthetase"/>
    <property type="match status" value="3"/>
</dbReference>
<dbReference type="PROSITE" id="PS00376">
    <property type="entry name" value="ADOMET_SYNTHASE_1"/>
    <property type="match status" value="1"/>
</dbReference>
<dbReference type="PROSITE" id="PS00377">
    <property type="entry name" value="ADOMET_SYNTHASE_2"/>
    <property type="match status" value="1"/>
</dbReference>
<evidence type="ECO:0000255" key="1">
    <source>
        <dbReference type="HAMAP-Rule" id="MF_00086"/>
    </source>
</evidence>
<keyword id="KW-0067">ATP-binding</keyword>
<keyword id="KW-0963">Cytoplasm</keyword>
<keyword id="KW-0460">Magnesium</keyword>
<keyword id="KW-0479">Metal-binding</keyword>
<keyword id="KW-0547">Nucleotide-binding</keyword>
<keyword id="KW-0554">One-carbon metabolism</keyword>
<keyword id="KW-0630">Potassium</keyword>
<keyword id="KW-1185">Reference proteome</keyword>
<keyword id="KW-0808">Transferase</keyword>
<accession>Q3J7R5</accession>
<comment type="function">
    <text evidence="1">Catalyzes the formation of S-adenosylmethionine (AdoMet) from methionine and ATP. The overall synthetic reaction is composed of two sequential steps, AdoMet formation and the subsequent tripolyphosphate hydrolysis which occurs prior to release of AdoMet from the enzyme.</text>
</comment>
<comment type="catalytic activity">
    <reaction evidence="1">
        <text>L-methionine + ATP + H2O = S-adenosyl-L-methionine + phosphate + diphosphate</text>
        <dbReference type="Rhea" id="RHEA:21080"/>
        <dbReference type="ChEBI" id="CHEBI:15377"/>
        <dbReference type="ChEBI" id="CHEBI:30616"/>
        <dbReference type="ChEBI" id="CHEBI:33019"/>
        <dbReference type="ChEBI" id="CHEBI:43474"/>
        <dbReference type="ChEBI" id="CHEBI:57844"/>
        <dbReference type="ChEBI" id="CHEBI:59789"/>
        <dbReference type="EC" id="2.5.1.6"/>
    </reaction>
</comment>
<comment type="cofactor">
    <cofactor evidence="1">
        <name>Mg(2+)</name>
        <dbReference type="ChEBI" id="CHEBI:18420"/>
    </cofactor>
    <text evidence="1">Binds 2 divalent ions per subunit.</text>
</comment>
<comment type="cofactor">
    <cofactor evidence="1">
        <name>K(+)</name>
        <dbReference type="ChEBI" id="CHEBI:29103"/>
    </cofactor>
    <text evidence="1">Binds 1 potassium ion per subunit.</text>
</comment>
<comment type="pathway">
    <text evidence="1">Amino-acid biosynthesis; S-adenosyl-L-methionine biosynthesis; S-adenosyl-L-methionine from L-methionine: step 1/1.</text>
</comment>
<comment type="subunit">
    <text evidence="1">Homotetramer; dimer of dimers.</text>
</comment>
<comment type="subcellular location">
    <subcellularLocation>
        <location evidence="1">Cytoplasm</location>
    </subcellularLocation>
</comment>
<comment type="similarity">
    <text evidence="1">Belongs to the AdoMet synthase family.</text>
</comment>
<gene>
    <name evidence="1" type="primary">metK</name>
    <name type="ordered locus">Noc_2678</name>
</gene>
<protein>
    <recommendedName>
        <fullName evidence="1">S-adenosylmethionine synthase</fullName>
        <shortName evidence="1">AdoMet synthase</shortName>
        <ecNumber evidence="1">2.5.1.6</ecNumber>
    </recommendedName>
    <alternativeName>
        <fullName evidence="1">MAT</fullName>
    </alternativeName>
    <alternativeName>
        <fullName evidence="1">Methionine adenosyltransferase</fullName>
    </alternativeName>
</protein>
<reference key="1">
    <citation type="journal article" date="2006" name="Appl. Environ. Microbiol.">
        <title>Complete genome sequence of the marine, chemolithoautotrophic, ammonia-oxidizing bacterium Nitrosococcus oceani ATCC 19707.</title>
        <authorList>
            <person name="Klotz M.G."/>
            <person name="Arp D.J."/>
            <person name="Chain P.S.G."/>
            <person name="El-Sheikh A.F."/>
            <person name="Hauser L.J."/>
            <person name="Hommes N.G."/>
            <person name="Larimer F.W."/>
            <person name="Malfatti S.A."/>
            <person name="Norton J.M."/>
            <person name="Poret-Peterson A.T."/>
            <person name="Vergez L.M."/>
            <person name="Ward B.B."/>
        </authorList>
    </citation>
    <scope>NUCLEOTIDE SEQUENCE [LARGE SCALE GENOMIC DNA]</scope>
    <source>
        <strain>ATCC 19707 / BCRC 17464 / JCM 30415 / NCIMB 11848 / C-107</strain>
    </source>
</reference>
<proteinExistence type="inferred from homology"/>
<organism>
    <name type="scientific">Nitrosococcus oceani (strain ATCC 19707 / BCRC 17464 / JCM 30415 / NCIMB 11848 / C-107)</name>
    <dbReference type="NCBI Taxonomy" id="323261"/>
    <lineage>
        <taxon>Bacteria</taxon>
        <taxon>Pseudomonadati</taxon>
        <taxon>Pseudomonadota</taxon>
        <taxon>Gammaproteobacteria</taxon>
        <taxon>Chromatiales</taxon>
        <taxon>Chromatiaceae</taxon>
        <taxon>Nitrosococcus</taxon>
    </lineage>
</organism>
<name>METK_NITOC</name>